<proteinExistence type="inferred from homology"/>
<dbReference type="EC" id="3.-.-.-"/>
<dbReference type="EMBL" id="AE000516">
    <property type="protein sequence ID" value="AAK46753.1"/>
    <property type="molecule type" value="Genomic_DNA"/>
</dbReference>
<dbReference type="PIR" id="H70681">
    <property type="entry name" value="H70681"/>
</dbReference>
<dbReference type="RefSeq" id="WP_003412293.1">
    <property type="nucleotide sequence ID" value="NZ_KK341227.1"/>
</dbReference>
<dbReference type="SMR" id="P9WG26"/>
<dbReference type="CAZy" id="GH23">
    <property type="family name" value="Glycoside Hydrolase Family 23"/>
</dbReference>
<dbReference type="KEGG" id="mtc:MT2458"/>
<dbReference type="PATRIC" id="fig|83331.31.peg.2649"/>
<dbReference type="HOGENOM" id="CLU_123842_1_0_11"/>
<dbReference type="Proteomes" id="UP000001020">
    <property type="component" value="Chromosome"/>
</dbReference>
<dbReference type="GO" id="GO:0005576">
    <property type="term" value="C:extracellular region"/>
    <property type="evidence" value="ECO:0007669"/>
    <property type="project" value="UniProtKB-ARBA"/>
</dbReference>
<dbReference type="GO" id="GO:0005886">
    <property type="term" value="C:plasma membrane"/>
    <property type="evidence" value="ECO:0007669"/>
    <property type="project" value="UniProtKB-SubCell"/>
</dbReference>
<dbReference type="GO" id="GO:0016787">
    <property type="term" value="F:hydrolase activity"/>
    <property type="evidence" value="ECO:0007669"/>
    <property type="project" value="UniProtKB-KW"/>
</dbReference>
<dbReference type="GO" id="GO:0010629">
    <property type="term" value="P:negative regulation of gene expression"/>
    <property type="evidence" value="ECO:0007669"/>
    <property type="project" value="UniProtKB-ARBA"/>
</dbReference>
<dbReference type="GO" id="GO:0009372">
    <property type="term" value="P:quorum sensing"/>
    <property type="evidence" value="ECO:0007669"/>
    <property type="project" value="UniProtKB-ARBA"/>
</dbReference>
<dbReference type="GO" id="GO:0042127">
    <property type="term" value="P:regulation of cell population proliferation"/>
    <property type="evidence" value="ECO:0007669"/>
    <property type="project" value="UniProtKB-ARBA"/>
</dbReference>
<dbReference type="CDD" id="cd13925">
    <property type="entry name" value="RPF"/>
    <property type="match status" value="1"/>
</dbReference>
<dbReference type="FunFam" id="1.10.530.10:FF:000025">
    <property type="entry name" value="Resuscitation-promoting factor RpfC"/>
    <property type="match status" value="1"/>
</dbReference>
<dbReference type="Gene3D" id="1.10.530.10">
    <property type="match status" value="1"/>
</dbReference>
<dbReference type="InterPro" id="IPR023346">
    <property type="entry name" value="Lysozyme-like_dom_sf"/>
</dbReference>
<dbReference type="InterPro" id="IPR010618">
    <property type="entry name" value="RPF"/>
</dbReference>
<dbReference type="Pfam" id="PF06737">
    <property type="entry name" value="Transglycosylas"/>
    <property type="match status" value="1"/>
</dbReference>
<dbReference type="SUPFAM" id="SSF53955">
    <property type="entry name" value="Lysozyme-like"/>
    <property type="match status" value="1"/>
</dbReference>
<sequence>MTPGLLTTAGAGRPRDRCARIVCTVFIETAVVATMFVALLGLSTISSKADDIDWDAIAQCESGGNWAANTGNGLYGGLQISQATWDSNGGVGSPAAASPQQQIEVADNIMKTQGPGAWPKCSSCSQGDAPLGSLTHILTFLAAETGGCSGSRDD</sequence>
<accession>P9WG26</accession>
<accession>F2GI59</accession>
<accession>L0TC67</accession>
<accession>P71755</accession>
<accession>Q7D783</accession>
<gene>
    <name type="primary">rpfD</name>
    <name type="ordered locus">MT2458</name>
</gene>
<keyword id="KW-1003">Cell membrane</keyword>
<keyword id="KW-0378">Hydrolase</keyword>
<keyword id="KW-0472">Membrane</keyword>
<keyword id="KW-1185">Reference proteome</keyword>
<keyword id="KW-0812">Transmembrane</keyword>
<keyword id="KW-1133">Transmembrane helix</keyword>
<keyword id="KW-0843">Virulence</keyword>
<protein>
    <recommendedName>
        <fullName>Resuscitation-promoting factor RpfD</fullName>
        <ecNumber>3.-.-.-</ecNumber>
    </recommendedName>
</protein>
<organism>
    <name type="scientific">Mycobacterium tuberculosis (strain CDC 1551 / Oshkosh)</name>
    <dbReference type="NCBI Taxonomy" id="83331"/>
    <lineage>
        <taxon>Bacteria</taxon>
        <taxon>Bacillati</taxon>
        <taxon>Actinomycetota</taxon>
        <taxon>Actinomycetes</taxon>
        <taxon>Mycobacteriales</taxon>
        <taxon>Mycobacteriaceae</taxon>
        <taxon>Mycobacterium</taxon>
        <taxon>Mycobacterium tuberculosis complex</taxon>
    </lineage>
</organism>
<evidence type="ECO:0000250" key="1"/>
<evidence type="ECO:0000255" key="2"/>
<evidence type="ECO:0000305" key="3"/>
<comment type="function">
    <text evidence="1">Factor that stimulates resuscitation of dormant cells. Has peptidoglycan (PG) hydrolytic activity. PG fragments could either directly activate the resuscitation pathway of dormant bacteria or serve as a substrate for endogenous Rpf, resulting in low molecular weight products with resuscitation activity (By similarity).</text>
</comment>
<comment type="subcellular location">
    <subcellularLocation>
        <location evidence="3">Cell membrane</location>
        <topology evidence="3">Single-pass membrane protein</topology>
    </subcellularLocation>
</comment>
<comment type="similarity">
    <text evidence="3">Belongs to the transglycosylase family. Rpf subfamily.</text>
</comment>
<feature type="chain" id="PRO_0000428435" description="Resuscitation-promoting factor RpfD">
    <location>
        <begin position="1"/>
        <end position="154"/>
    </location>
</feature>
<feature type="transmembrane region" description="Helical" evidence="2">
    <location>
        <begin position="21"/>
        <end position="41"/>
    </location>
</feature>
<reference key="1">
    <citation type="journal article" date="2002" name="J. Bacteriol.">
        <title>Whole-genome comparison of Mycobacterium tuberculosis clinical and laboratory strains.</title>
        <authorList>
            <person name="Fleischmann R.D."/>
            <person name="Alland D."/>
            <person name="Eisen J.A."/>
            <person name="Carpenter L."/>
            <person name="White O."/>
            <person name="Peterson J.D."/>
            <person name="DeBoy R.T."/>
            <person name="Dodson R.J."/>
            <person name="Gwinn M.L."/>
            <person name="Haft D.H."/>
            <person name="Hickey E.K."/>
            <person name="Kolonay J.F."/>
            <person name="Nelson W.C."/>
            <person name="Umayam L.A."/>
            <person name="Ermolaeva M.D."/>
            <person name="Salzberg S.L."/>
            <person name="Delcher A."/>
            <person name="Utterback T.R."/>
            <person name="Weidman J.F."/>
            <person name="Khouri H.M."/>
            <person name="Gill J."/>
            <person name="Mikula A."/>
            <person name="Bishai W."/>
            <person name="Jacobs W.R. Jr."/>
            <person name="Venter J.C."/>
            <person name="Fraser C.M."/>
        </authorList>
    </citation>
    <scope>NUCLEOTIDE SEQUENCE [LARGE SCALE GENOMIC DNA]</scope>
    <source>
        <strain>CDC 1551 / Oshkosh</strain>
    </source>
</reference>
<name>RPFD_MYCTO</name>